<sequence length="106" mass="11431">MISVNFSPLISSSNTHICTIGAKTSGYPLQFSATTLAIVVPQLPDPITVTLKGFSAAFKETEEELLFLPAFKWPEVKFNLSAAADIFILSIFVFVEGGGVQYTIVS</sequence>
<dbReference type="EMBL" id="Z48432">
    <property type="protein sequence ID" value="CAA88336.1"/>
    <property type="molecule type" value="Genomic_DNA"/>
</dbReference>
<dbReference type="EMBL" id="Z74071">
    <property type="protein sequence ID" value="CAA98581.1"/>
    <property type="molecule type" value="Genomic_DNA"/>
</dbReference>
<dbReference type="EMBL" id="AY693279">
    <property type="protein sequence ID" value="AAT93298.1"/>
    <property type="molecule type" value="Genomic_DNA"/>
</dbReference>
<dbReference type="PIR" id="S52496">
    <property type="entry name" value="S52496"/>
</dbReference>
<dbReference type="DIP" id="DIP-2045N"/>
<dbReference type="PaxDb" id="4932-YDL023C"/>
<dbReference type="EnsemblFungi" id="YDL023C_mRNA">
    <property type="protein sequence ID" value="YDL023C"/>
    <property type="gene ID" value="YDL023C"/>
</dbReference>
<dbReference type="AGR" id="SGD:S000002181"/>
<dbReference type="SGD" id="S000002181">
    <property type="gene designation" value="YDL023C"/>
</dbReference>
<dbReference type="HOGENOM" id="CLU_2225292_0_0_1"/>
<dbReference type="ChiTaRS" id="YDL023C">
    <property type="organism name" value="yeast"/>
</dbReference>
<organism>
    <name type="scientific">Saccharomyces cerevisiae (strain ATCC 204508 / S288c)</name>
    <name type="common">Baker's yeast</name>
    <dbReference type="NCBI Taxonomy" id="559292"/>
    <lineage>
        <taxon>Eukaryota</taxon>
        <taxon>Fungi</taxon>
        <taxon>Dikarya</taxon>
        <taxon>Ascomycota</taxon>
        <taxon>Saccharomycotina</taxon>
        <taxon>Saccharomycetes</taxon>
        <taxon>Saccharomycetales</taxon>
        <taxon>Saccharomycetaceae</taxon>
        <taxon>Saccharomyces</taxon>
    </lineage>
</organism>
<protein>
    <recommendedName>
        <fullName>Putative uncharacterized protein YDL023C</fullName>
    </recommendedName>
</protein>
<comment type="miscellaneous">
    <text evidence="1">Partially overlaps GPD1.</text>
</comment>
<comment type="caution">
    <text evidence="2">Product of a dubious gene prediction unlikely to encode a functional protein. Because of that it is not part of the S.cerevisiae S288c complete/reference proteome set.</text>
</comment>
<gene>
    <name type="ordered locus">YDL023C</name>
</gene>
<evidence type="ECO:0000305" key="1"/>
<evidence type="ECO:0000305" key="2">
    <source>
    </source>
</evidence>
<reference key="1">
    <citation type="journal article" date="1997" name="Nature">
        <title>The nucleotide sequence of Saccharomyces cerevisiae chromosome IV.</title>
        <authorList>
            <person name="Jacq C."/>
            <person name="Alt-Moerbe J."/>
            <person name="Andre B."/>
            <person name="Arnold W."/>
            <person name="Bahr A."/>
            <person name="Ballesta J.P.G."/>
            <person name="Bargues M."/>
            <person name="Baron L."/>
            <person name="Becker A."/>
            <person name="Biteau N."/>
            <person name="Bloecker H."/>
            <person name="Blugeon C."/>
            <person name="Boskovic J."/>
            <person name="Brandt P."/>
            <person name="Brueckner M."/>
            <person name="Buitrago M.J."/>
            <person name="Coster F."/>
            <person name="Delaveau T."/>
            <person name="del Rey F."/>
            <person name="Dujon B."/>
            <person name="Eide L.G."/>
            <person name="Garcia-Cantalejo J.M."/>
            <person name="Goffeau A."/>
            <person name="Gomez-Peris A."/>
            <person name="Granotier C."/>
            <person name="Hanemann V."/>
            <person name="Hankeln T."/>
            <person name="Hoheisel J.D."/>
            <person name="Jaeger W."/>
            <person name="Jimenez A."/>
            <person name="Jonniaux J.-L."/>
            <person name="Kraemer C."/>
            <person name="Kuester H."/>
            <person name="Laamanen P."/>
            <person name="Legros Y."/>
            <person name="Louis E.J."/>
            <person name="Moeller-Rieker S."/>
            <person name="Monnet A."/>
            <person name="Moro M."/>
            <person name="Mueller-Auer S."/>
            <person name="Nussbaumer B."/>
            <person name="Paricio N."/>
            <person name="Paulin L."/>
            <person name="Perea J."/>
            <person name="Perez-Alonso M."/>
            <person name="Perez-Ortin J.E."/>
            <person name="Pohl T.M."/>
            <person name="Prydz H."/>
            <person name="Purnelle B."/>
            <person name="Rasmussen S.W."/>
            <person name="Remacha M.A."/>
            <person name="Revuelta J.L."/>
            <person name="Rieger M."/>
            <person name="Salom D."/>
            <person name="Saluz H.P."/>
            <person name="Saiz J.E."/>
            <person name="Saren A.-M."/>
            <person name="Schaefer M."/>
            <person name="Scharfe M."/>
            <person name="Schmidt E.R."/>
            <person name="Schneider C."/>
            <person name="Scholler P."/>
            <person name="Schwarz S."/>
            <person name="Soler-Mira A."/>
            <person name="Urrestarazu L.A."/>
            <person name="Verhasselt P."/>
            <person name="Vissers S."/>
            <person name="Voet M."/>
            <person name="Volckaert G."/>
            <person name="Wagner G."/>
            <person name="Wambutt R."/>
            <person name="Wedler E."/>
            <person name="Wedler H."/>
            <person name="Woelfl S."/>
            <person name="Harris D.E."/>
            <person name="Bowman S."/>
            <person name="Brown D."/>
            <person name="Churcher C.M."/>
            <person name="Connor R."/>
            <person name="Dedman K."/>
            <person name="Gentles S."/>
            <person name="Hamlin N."/>
            <person name="Hunt S."/>
            <person name="Jones L."/>
            <person name="McDonald S."/>
            <person name="Murphy L.D."/>
            <person name="Niblett D."/>
            <person name="Odell C."/>
            <person name="Oliver K."/>
            <person name="Rajandream M.A."/>
            <person name="Richards C."/>
            <person name="Shore L."/>
            <person name="Walsh S.V."/>
            <person name="Barrell B.G."/>
            <person name="Dietrich F.S."/>
            <person name="Mulligan J.T."/>
            <person name="Allen E."/>
            <person name="Araujo R."/>
            <person name="Aviles E."/>
            <person name="Berno A."/>
            <person name="Carpenter J."/>
            <person name="Chen E."/>
            <person name="Cherry J.M."/>
            <person name="Chung E."/>
            <person name="Duncan M."/>
            <person name="Hunicke-Smith S."/>
            <person name="Hyman R.W."/>
            <person name="Komp C."/>
            <person name="Lashkari D."/>
            <person name="Lew H."/>
            <person name="Lin D."/>
            <person name="Mosedale D."/>
            <person name="Nakahara K."/>
            <person name="Namath A."/>
            <person name="Oefner P."/>
            <person name="Oh C."/>
            <person name="Petel F.X."/>
            <person name="Roberts D."/>
            <person name="Schramm S."/>
            <person name="Schroeder M."/>
            <person name="Shogren T."/>
            <person name="Shroff N."/>
            <person name="Winant A."/>
            <person name="Yelton M.A."/>
            <person name="Botstein D."/>
            <person name="Davis R.W."/>
            <person name="Johnston M."/>
            <person name="Andrews S."/>
            <person name="Brinkman R."/>
            <person name="Cooper J."/>
            <person name="Ding H."/>
            <person name="Du Z."/>
            <person name="Favello A."/>
            <person name="Fulton L."/>
            <person name="Gattung S."/>
            <person name="Greco T."/>
            <person name="Hallsworth K."/>
            <person name="Hawkins J."/>
            <person name="Hillier L.W."/>
            <person name="Jier M."/>
            <person name="Johnson D."/>
            <person name="Johnston L."/>
            <person name="Kirsten J."/>
            <person name="Kucaba T."/>
            <person name="Langston Y."/>
            <person name="Latreille P."/>
            <person name="Le T."/>
            <person name="Mardis E."/>
            <person name="Menezes S."/>
            <person name="Miller N."/>
            <person name="Nhan M."/>
            <person name="Pauley A."/>
            <person name="Peluso D."/>
            <person name="Rifkin L."/>
            <person name="Riles L."/>
            <person name="Taich A."/>
            <person name="Trevaskis E."/>
            <person name="Vignati D."/>
            <person name="Wilcox L."/>
            <person name="Wohldman P."/>
            <person name="Vaudin M."/>
            <person name="Wilson R."/>
            <person name="Waterston R."/>
            <person name="Albermann K."/>
            <person name="Hani J."/>
            <person name="Heumann K."/>
            <person name="Kleine K."/>
            <person name="Mewes H.-W."/>
            <person name="Zollner A."/>
            <person name="Zaccaria P."/>
        </authorList>
    </citation>
    <scope>NUCLEOTIDE SEQUENCE [LARGE SCALE GENOMIC DNA]</scope>
    <source>
        <strain>ATCC 204508 / S288c</strain>
    </source>
</reference>
<reference key="2">
    <citation type="journal article" date="2014" name="G3 (Bethesda)">
        <title>The reference genome sequence of Saccharomyces cerevisiae: Then and now.</title>
        <authorList>
            <person name="Engel S.R."/>
            <person name="Dietrich F.S."/>
            <person name="Fisk D.G."/>
            <person name="Binkley G."/>
            <person name="Balakrishnan R."/>
            <person name="Costanzo M.C."/>
            <person name="Dwight S.S."/>
            <person name="Hitz B.C."/>
            <person name="Karra K."/>
            <person name="Nash R.S."/>
            <person name="Weng S."/>
            <person name="Wong E.D."/>
            <person name="Lloyd P."/>
            <person name="Skrzypek M.S."/>
            <person name="Miyasato S.R."/>
            <person name="Simison M."/>
            <person name="Cherry J.M."/>
        </authorList>
    </citation>
    <scope>GENOME REANNOTATION</scope>
    <source>
        <strain>ATCC 204508 / S288c</strain>
    </source>
</reference>
<reference key="3">
    <citation type="journal article" date="2007" name="Genome Res.">
        <title>Approaching a complete repository of sequence-verified protein-encoding clones for Saccharomyces cerevisiae.</title>
        <authorList>
            <person name="Hu Y."/>
            <person name="Rolfs A."/>
            <person name="Bhullar B."/>
            <person name="Murthy T.V.S."/>
            <person name="Zhu C."/>
            <person name="Berger M.F."/>
            <person name="Camargo A.A."/>
            <person name="Kelley F."/>
            <person name="McCarron S."/>
            <person name="Jepson D."/>
            <person name="Richardson A."/>
            <person name="Raphael J."/>
            <person name="Moreira D."/>
            <person name="Taycher E."/>
            <person name="Zuo D."/>
            <person name="Mohr S."/>
            <person name="Kane M.F."/>
            <person name="Williamson J."/>
            <person name="Simpson A.J.G."/>
            <person name="Bulyk M.L."/>
            <person name="Harlow E."/>
            <person name="Marsischky G."/>
            <person name="Kolodner R.D."/>
            <person name="LaBaer J."/>
        </authorList>
    </citation>
    <scope>NUCLEOTIDE SEQUENCE [GENOMIC DNA]</scope>
    <source>
        <strain>ATCC 204508 / S288c</strain>
    </source>
</reference>
<accession>Q12264</accession>
<name>YD023_YEAST</name>
<feature type="chain" id="PRO_0000299845" description="Putative uncharacterized protein YDL023C">
    <location>
        <begin position="1"/>
        <end position="106"/>
    </location>
</feature>
<proteinExistence type="uncertain"/>